<sequence length="295" mass="31973">MDAAPMIHGTTVWPSPAKLNLFLYITGRRANGYHDLQTLFQFLDHGDELTITANNSGNITLSPALADVALEDNLIYKAAMALKNAAQSPLGADIQLHKVLPMGGGIGGGSSNAATTLVALNYLWQTGLSDDQLAEIGLALGADVPVFTRGFAAFAEGVGEELSAVEPEEKWYLVVRPAVSIATKDIFTHPQLMRNTPKRDLASLLTTPYENDCEKIVRSLYPEVDKQLSWLLQYAPSRLTGTGSCVFAEFSSRKDAQAVFAQLSDNVLAFVAQGRNVSPLRKTLADYQSAKIRPY</sequence>
<gene>
    <name evidence="1" type="primary">ispE</name>
    <name type="ordered locus">VC_2182</name>
</gene>
<name>ISPE_VIBCH</name>
<protein>
    <recommendedName>
        <fullName evidence="1">4-diphosphocytidyl-2-C-methyl-D-erythritol kinase</fullName>
        <shortName evidence="1">CMK</shortName>
        <ecNumber evidence="1">2.7.1.148</ecNumber>
    </recommendedName>
    <alternativeName>
        <fullName evidence="1">4-(cytidine-5'-diphospho)-2-C-methyl-D-erythritol kinase</fullName>
    </alternativeName>
</protein>
<proteinExistence type="inferred from homology"/>
<keyword id="KW-0067">ATP-binding</keyword>
<keyword id="KW-0414">Isoprene biosynthesis</keyword>
<keyword id="KW-0418">Kinase</keyword>
<keyword id="KW-0547">Nucleotide-binding</keyword>
<keyword id="KW-1185">Reference proteome</keyword>
<keyword id="KW-0808">Transferase</keyword>
<accession>Q9KQ23</accession>
<evidence type="ECO:0000255" key="1">
    <source>
        <dbReference type="HAMAP-Rule" id="MF_00061"/>
    </source>
</evidence>
<dbReference type="EC" id="2.7.1.148" evidence="1"/>
<dbReference type="EMBL" id="AE003852">
    <property type="protein sequence ID" value="AAF95327.1"/>
    <property type="molecule type" value="Genomic_DNA"/>
</dbReference>
<dbReference type="PIR" id="E82109">
    <property type="entry name" value="E82109"/>
</dbReference>
<dbReference type="RefSeq" id="NP_231813.1">
    <property type="nucleotide sequence ID" value="NC_002505.1"/>
</dbReference>
<dbReference type="SMR" id="Q9KQ23"/>
<dbReference type="STRING" id="243277.VC_2182"/>
<dbReference type="DNASU" id="2613318"/>
<dbReference type="EnsemblBacteria" id="AAF95327">
    <property type="protein sequence ID" value="AAF95327"/>
    <property type="gene ID" value="VC_2182"/>
</dbReference>
<dbReference type="KEGG" id="vch:VC_2182"/>
<dbReference type="PATRIC" id="fig|243277.26.peg.2080"/>
<dbReference type="eggNOG" id="COG1947">
    <property type="taxonomic scope" value="Bacteria"/>
</dbReference>
<dbReference type="HOGENOM" id="CLU_053057_3_0_6"/>
<dbReference type="UniPathway" id="UPA00056">
    <property type="reaction ID" value="UER00094"/>
</dbReference>
<dbReference type="Proteomes" id="UP000000584">
    <property type="component" value="Chromosome 1"/>
</dbReference>
<dbReference type="GO" id="GO:0050515">
    <property type="term" value="F:4-(cytidine 5'-diphospho)-2-C-methyl-D-erythritol kinase activity"/>
    <property type="evidence" value="ECO:0000318"/>
    <property type="project" value="GO_Central"/>
</dbReference>
<dbReference type="GO" id="GO:0005524">
    <property type="term" value="F:ATP binding"/>
    <property type="evidence" value="ECO:0007669"/>
    <property type="project" value="UniProtKB-UniRule"/>
</dbReference>
<dbReference type="GO" id="GO:0019288">
    <property type="term" value="P:isopentenyl diphosphate biosynthetic process, methylerythritol 4-phosphate pathway"/>
    <property type="evidence" value="ECO:0007669"/>
    <property type="project" value="UniProtKB-UniRule"/>
</dbReference>
<dbReference type="GO" id="GO:0016114">
    <property type="term" value="P:terpenoid biosynthetic process"/>
    <property type="evidence" value="ECO:0007669"/>
    <property type="project" value="InterPro"/>
</dbReference>
<dbReference type="FunFam" id="3.30.230.10:FF:000022">
    <property type="entry name" value="4-diphosphocytidyl-2-C-methyl-D-erythritol kinase"/>
    <property type="match status" value="1"/>
</dbReference>
<dbReference type="FunFam" id="3.30.70.890:FF:000004">
    <property type="entry name" value="4-diphosphocytidyl-2-C-methyl-D-erythritol kinase"/>
    <property type="match status" value="1"/>
</dbReference>
<dbReference type="Gene3D" id="3.30.230.10">
    <property type="match status" value="1"/>
</dbReference>
<dbReference type="Gene3D" id="3.30.70.890">
    <property type="entry name" value="GHMP kinase, C-terminal domain"/>
    <property type="match status" value="1"/>
</dbReference>
<dbReference type="HAMAP" id="MF_00061">
    <property type="entry name" value="IspE"/>
    <property type="match status" value="1"/>
</dbReference>
<dbReference type="InterPro" id="IPR013750">
    <property type="entry name" value="GHMP_kinase_C_dom"/>
</dbReference>
<dbReference type="InterPro" id="IPR036554">
    <property type="entry name" value="GHMP_kinase_C_sf"/>
</dbReference>
<dbReference type="InterPro" id="IPR006204">
    <property type="entry name" value="GHMP_kinase_N_dom"/>
</dbReference>
<dbReference type="InterPro" id="IPR004424">
    <property type="entry name" value="IspE"/>
</dbReference>
<dbReference type="InterPro" id="IPR020568">
    <property type="entry name" value="Ribosomal_Su5_D2-typ_SF"/>
</dbReference>
<dbReference type="InterPro" id="IPR014721">
    <property type="entry name" value="Ribsml_uS5_D2-typ_fold_subgr"/>
</dbReference>
<dbReference type="NCBIfam" id="TIGR00154">
    <property type="entry name" value="ispE"/>
    <property type="match status" value="1"/>
</dbReference>
<dbReference type="PANTHER" id="PTHR43527">
    <property type="entry name" value="4-DIPHOSPHOCYTIDYL-2-C-METHYL-D-ERYTHRITOL KINASE, CHLOROPLASTIC"/>
    <property type="match status" value="1"/>
</dbReference>
<dbReference type="PANTHER" id="PTHR43527:SF2">
    <property type="entry name" value="4-DIPHOSPHOCYTIDYL-2-C-METHYL-D-ERYTHRITOL KINASE, CHLOROPLASTIC"/>
    <property type="match status" value="1"/>
</dbReference>
<dbReference type="Pfam" id="PF08544">
    <property type="entry name" value="GHMP_kinases_C"/>
    <property type="match status" value="1"/>
</dbReference>
<dbReference type="Pfam" id="PF00288">
    <property type="entry name" value="GHMP_kinases_N"/>
    <property type="match status" value="1"/>
</dbReference>
<dbReference type="PIRSF" id="PIRSF010376">
    <property type="entry name" value="IspE"/>
    <property type="match status" value="1"/>
</dbReference>
<dbReference type="SUPFAM" id="SSF55060">
    <property type="entry name" value="GHMP Kinase, C-terminal domain"/>
    <property type="match status" value="1"/>
</dbReference>
<dbReference type="SUPFAM" id="SSF54211">
    <property type="entry name" value="Ribosomal protein S5 domain 2-like"/>
    <property type="match status" value="1"/>
</dbReference>
<comment type="function">
    <text evidence="1">Catalyzes the phosphorylation of the position 2 hydroxy group of 4-diphosphocytidyl-2C-methyl-D-erythritol.</text>
</comment>
<comment type="catalytic activity">
    <reaction evidence="1">
        <text>4-CDP-2-C-methyl-D-erythritol + ATP = 4-CDP-2-C-methyl-D-erythritol 2-phosphate + ADP + H(+)</text>
        <dbReference type="Rhea" id="RHEA:18437"/>
        <dbReference type="ChEBI" id="CHEBI:15378"/>
        <dbReference type="ChEBI" id="CHEBI:30616"/>
        <dbReference type="ChEBI" id="CHEBI:57823"/>
        <dbReference type="ChEBI" id="CHEBI:57919"/>
        <dbReference type="ChEBI" id="CHEBI:456216"/>
        <dbReference type="EC" id="2.7.1.148"/>
    </reaction>
</comment>
<comment type="pathway">
    <text evidence="1">Isoprenoid biosynthesis; isopentenyl diphosphate biosynthesis via DXP pathway; isopentenyl diphosphate from 1-deoxy-D-xylulose 5-phosphate: step 3/6.</text>
</comment>
<comment type="similarity">
    <text evidence="1">Belongs to the GHMP kinase family. IspE subfamily.</text>
</comment>
<organism>
    <name type="scientific">Vibrio cholerae serotype O1 (strain ATCC 39315 / El Tor Inaba N16961)</name>
    <dbReference type="NCBI Taxonomy" id="243277"/>
    <lineage>
        <taxon>Bacteria</taxon>
        <taxon>Pseudomonadati</taxon>
        <taxon>Pseudomonadota</taxon>
        <taxon>Gammaproteobacteria</taxon>
        <taxon>Vibrionales</taxon>
        <taxon>Vibrionaceae</taxon>
        <taxon>Vibrio</taxon>
    </lineage>
</organism>
<reference key="1">
    <citation type="journal article" date="2000" name="Nature">
        <title>DNA sequence of both chromosomes of the cholera pathogen Vibrio cholerae.</title>
        <authorList>
            <person name="Heidelberg J.F."/>
            <person name="Eisen J.A."/>
            <person name="Nelson W.C."/>
            <person name="Clayton R.A."/>
            <person name="Gwinn M.L."/>
            <person name="Dodson R.J."/>
            <person name="Haft D.H."/>
            <person name="Hickey E.K."/>
            <person name="Peterson J.D."/>
            <person name="Umayam L.A."/>
            <person name="Gill S.R."/>
            <person name="Nelson K.E."/>
            <person name="Read T.D."/>
            <person name="Tettelin H."/>
            <person name="Richardson D.L."/>
            <person name="Ermolaeva M.D."/>
            <person name="Vamathevan J.J."/>
            <person name="Bass S."/>
            <person name="Qin H."/>
            <person name="Dragoi I."/>
            <person name="Sellers P."/>
            <person name="McDonald L.A."/>
            <person name="Utterback T.R."/>
            <person name="Fleischmann R.D."/>
            <person name="Nierman W.C."/>
            <person name="White O."/>
            <person name="Salzberg S.L."/>
            <person name="Smith H.O."/>
            <person name="Colwell R.R."/>
            <person name="Mekalanos J.J."/>
            <person name="Venter J.C."/>
            <person name="Fraser C.M."/>
        </authorList>
    </citation>
    <scope>NUCLEOTIDE SEQUENCE [LARGE SCALE GENOMIC DNA]</scope>
    <source>
        <strain>ATCC 39315 / El Tor Inaba N16961</strain>
    </source>
</reference>
<feature type="chain" id="PRO_0000189285" description="4-diphosphocytidyl-2-C-methyl-D-erythritol kinase">
    <location>
        <begin position="1"/>
        <end position="295"/>
    </location>
</feature>
<feature type="active site" evidence="1">
    <location>
        <position position="18"/>
    </location>
</feature>
<feature type="active site" evidence="1">
    <location>
        <position position="143"/>
    </location>
</feature>
<feature type="binding site" evidence="1">
    <location>
        <begin position="101"/>
        <end position="111"/>
    </location>
    <ligand>
        <name>ATP</name>
        <dbReference type="ChEBI" id="CHEBI:30616"/>
    </ligand>
</feature>